<accession>P79250</accession>
<accession>Q6VVV0</accession>
<organism>
    <name type="scientific">Canis lupus familiaris</name>
    <name type="common">Dog</name>
    <name type="synonym">Canis familiaris</name>
    <dbReference type="NCBI Taxonomy" id="9615"/>
    <lineage>
        <taxon>Eukaryota</taxon>
        <taxon>Metazoa</taxon>
        <taxon>Chordata</taxon>
        <taxon>Craniata</taxon>
        <taxon>Vertebrata</taxon>
        <taxon>Euteleostomi</taxon>
        <taxon>Mammalia</taxon>
        <taxon>Eutheria</taxon>
        <taxon>Laurasiatheria</taxon>
        <taxon>Carnivora</taxon>
        <taxon>Caniformia</taxon>
        <taxon>Canidae</taxon>
        <taxon>Canis</taxon>
    </lineage>
</organism>
<dbReference type="EMBL" id="AY323909">
    <property type="protein sequence ID" value="AAQ89935.1"/>
    <property type="molecule type" value="Genomic_DNA"/>
</dbReference>
<dbReference type="EMBL" id="AB193090">
    <property type="protein sequence ID" value="BAD60920.1"/>
    <property type="molecule type" value="mRNA"/>
</dbReference>
<dbReference type="EMBL" id="AY204572">
    <property type="protein sequence ID" value="AAP12469.1"/>
    <property type="molecule type" value="Genomic_DNA"/>
</dbReference>
<dbReference type="EMBL" id="S82461">
    <property type="protein sequence ID" value="AAB37488.2"/>
    <property type="molecule type" value="mRNA"/>
</dbReference>
<dbReference type="RefSeq" id="NP_001006949.1">
    <property type="nucleotide sequence ID" value="NM_001006948.1"/>
</dbReference>
<dbReference type="SMR" id="P79250"/>
<dbReference type="FunCoup" id="P79250">
    <property type="interactions" value="240"/>
</dbReference>
<dbReference type="BindingDB" id="P79250"/>
<dbReference type="GlyCosmos" id="P79250">
    <property type="glycosylation" value="2 sites, No reported glycans"/>
</dbReference>
<dbReference type="Ensembl" id="ENSCAFT00000107710.1">
    <property type="protein sequence ID" value="ENSCAFP00000066974.1"/>
    <property type="gene ID" value="ENSCAFG00000055063.1"/>
</dbReference>
<dbReference type="Ensembl" id="ENSCAFT00030014608.1">
    <property type="protein sequence ID" value="ENSCAFP00030012740.1"/>
    <property type="gene ID" value="ENSCAFG00030007970.1"/>
</dbReference>
<dbReference type="Ensembl" id="ENSCAFT00040040864.1">
    <property type="protein sequence ID" value="ENSCAFP00040035634.1"/>
    <property type="gene ID" value="ENSCAFG00040022012.1"/>
</dbReference>
<dbReference type="Ensembl" id="ENSCAFT00845015216.1">
    <property type="protein sequence ID" value="ENSCAFP00845011816.1"/>
    <property type="gene ID" value="ENSCAFG00845008653.1"/>
</dbReference>
<dbReference type="GeneID" id="403741"/>
<dbReference type="KEGG" id="cfa:403741"/>
<dbReference type="CTD" id="3351"/>
<dbReference type="VEuPathDB" id="HostDB:ENSCAFG00845008653"/>
<dbReference type="VGNC" id="VGNC:110597">
    <property type="gene designation" value="HTR1B"/>
</dbReference>
<dbReference type="GeneTree" id="ENSGT01010000222287"/>
<dbReference type="InParanoid" id="P79250"/>
<dbReference type="OrthoDB" id="5956310at2759"/>
<dbReference type="Reactome" id="R-CFA-390666">
    <property type="pathway name" value="Serotonin receptors"/>
</dbReference>
<dbReference type="Reactome" id="R-CFA-418594">
    <property type="pathway name" value="G alpha (i) signalling events"/>
</dbReference>
<dbReference type="Proteomes" id="UP000002254">
    <property type="component" value="Chromosome 12"/>
</dbReference>
<dbReference type="Proteomes" id="UP000694429">
    <property type="component" value="Chromosome 12"/>
</dbReference>
<dbReference type="Proteomes" id="UP000694542">
    <property type="component" value="Chromosome 12"/>
</dbReference>
<dbReference type="Proteomes" id="UP000805418">
    <property type="component" value="Chromosome 12"/>
</dbReference>
<dbReference type="GO" id="GO:0030425">
    <property type="term" value="C:dendrite"/>
    <property type="evidence" value="ECO:0000318"/>
    <property type="project" value="GO_Central"/>
</dbReference>
<dbReference type="GO" id="GO:0005783">
    <property type="term" value="C:endoplasmic reticulum"/>
    <property type="evidence" value="ECO:0007669"/>
    <property type="project" value="Ensembl"/>
</dbReference>
<dbReference type="GO" id="GO:0098666">
    <property type="term" value="C:G protein-coupled serotonin receptor complex"/>
    <property type="evidence" value="ECO:0007669"/>
    <property type="project" value="Ensembl"/>
</dbReference>
<dbReference type="GO" id="GO:0005886">
    <property type="term" value="C:plasma membrane"/>
    <property type="evidence" value="ECO:0000250"/>
    <property type="project" value="UniProtKB"/>
</dbReference>
<dbReference type="GO" id="GO:0042734">
    <property type="term" value="C:presynaptic membrane"/>
    <property type="evidence" value="ECO:0007669"/>
    <property type="project" value="Ensembl"/>
</dbReference>
<dbReference type="GO" id="GO:0099154">
    <property type="term" value="C:serotonergic synapse"/>
    <property type="evidence" value="ECO:0007669"/>
    <property type="project" value="Ensembl"/>
</dbReference>
<dbReference type="GO" id="GO:0004993">
    <property type="term" value="F:G protein-coupled serotonin receptor activity"/>
    <property type="evidence" value="ECO:0000250"/>
    <property type="project" value="UniProtKB"/>
</dbReference>
<dbReference type="GO" id="GO:0001586">
    <property type="term" value="F:Gi/o-coupled serotonin receptor activity"/>
    <property type="evidence" value="ECO:0007669"/>
    <property type="project" value="Ensembl"/>
</dbReference>
<dbReference type="GO" id="GO:0030594">
    <property type="term" value="F:neurotransmitter receptor activity"/>
    <property type="evidence" value="ECO:0000318"/>
    <property type="project" value="GO_Central"/>
</dbReference>
<dbReference type="GO" id="GO:0051378">
    <property type="term" value="F:serotonin binding"/>
    <property type="evidence" value="ECO:0007669"/>
    <property type="project" value="Ensembl"/>
</dbReference>
<dbReference type="GO" id="GO:0099589">
    <property type="term" value="F:serotonin receptor activity"/>
    <property type="evidence" value="ECO:0007669"/>
    <property type="project" value="Ensembl"/>
</dbReference>
<dbReference type="GO" id="GO:0007198">
    <property type="term" value="P:adenylate cyclase-inhibiting serotonin receptor signaling pathway"/>
    <property type="evidence" value="ECO:0000250"/>
    <property type="project" value="UniProtKB"/>
</dbReference>
<dbReference type="GO" id="GO:0046849">
    <property type="term" value="P:bone remodeling"/>
    <property type="evidence" value="ECO:0007669"/>
    <property type="project" value="Ensembl"/>
</dbReference>
<dbReference type="GO" id="GO:0071312">
    <property type="term" value="P:cellular response to alkaloid"/>
    <property type="evidence" value="ECO:0000250"/>
    <property type="project" value="UniProtKB"/>
</dbReference>
<dbReference type="GO" id="GO:0071466">
    <property type="term" value="P:cellular response to xenobiotic stimulus"/>
    <property type="evidence" value="ECO:0000250"/>
    <property type="project" value="UniProtKB"/>
</dbReference>
<dbReference type="GO" id="GO:0007268">
    <property type="term" value="P:chemical synaptic transmission"/>
    <property type="evidence" value="ECO:0000318"/>
    <property type="project" value="GO_Central"/>
</dbReference>
<dbReference type="GO" id="GO:0007187">
    <property type="term" value="P:G protein-coupled receptor signaling pathway, coupled to cyclic nucleotide second messenger"/>
    <property type="evidence" value="ECO:0000318"/>
    <property type="project" value="GO_Central"/>
</dbReference>
<dbReference type="GO" id="GO:0014063">
    <property type="term" value="P:negative regulation of serotonin secretion"/>
    <property type="evidence" value="ECO:0000250"/>
    <property type="project" value="UniProtKB"/>
</dbReference>
<dbReference type="GO" id="GO:0007208">
    <property type="term" value="P:phospholipase C-activating serotonin receptor signaling pathway"/>
    <property type="evidence" value="ECO:0007669"/>
    <property type="project" value="Ensembl"/>
</dbReference>
<dbReference type="GO" id="GO:1904707">
    <property type="term" value="P:positive regulation of vascular associated smooth muscle cell proliferation"/>
    <property type="evidence" value="ECO:0007669"/>
    <property type="project" value="Ensembl"/>
</dbReference>
<dbReference type="GO" id="GO:0050795">
    <property type="term" value="P:regulation of behavior"/>
    <property type="evidence" value="ECO:0007669"/>
    <property type="project" value="InterPro"/>
</dbReference>
<dbReference type="GO" id="GO:0042310">
    <property type="term" value="P:vasoconstriction"/>
    <property type="evidence" value="ECO:0007669"/>
    <property type="project" value="InterPro"/>
</dbReference>
<dbReference type="CDD" id="cd15333">
    <property type="entry name" value="7tmA_5-HT1B_1D"/>
    <property type="match status" value="1"/>
</dbReference>
<dbReference type="Gene3D" id="1.20.1070.10">
    <property type="entry name" value="Rhodopsin 7-helix transmembrane proteins"/>
    <property type="match status" value="1"/>
</dbReference>
<dbReference type="InterPro" id="IPR002147">
    <property type="entry name" value="5HT1B_rcpt"/>
</dbReference>
<dbReference type="InterPro" id="IPR002231">
    <property type="entry name" value="5HT_rcpt"/>
</dbReference>
<dbReference type="InterPro" id="IPR000276">
    <property type="entry name" value="GPCR_Rhodpsn"/>
</dbReference>
<dbReference type="InterPro" id="IPR017452">
    <property type="entry name" value="GPCR_Rhodpsn_7TM"/>
</dbReference>
<dbReference type="PANTHER" id="PTHR24248:SF201">
    <property type="entry name" value="5-HYDROXYTRYPTAMINE RECEPTOR 1B"/>
    <property type="match status" value="1"/>
</dbReference>
<dbReference type="PANTHER" id="PTHR24248">
    <property type="entry name" value="ADRENERGIC RECEPTOR-RELATED G-PROTEIN COUPLED RECEPTOR"/>
    <property type="match status" value="1"/>
</dbReference>
<dbReference type="Pfam" id="PF00001">
    <property type="entry name" value="7tm_1"/>
    <property type="match status" value="1"/>
</dbReference>
<dbReference type="PRINTS" id="PR00513">
    <property type="entry name" value="5HT1BRECEPTR"/>
</dbReference>
<dbReference type="PRINTS" id="PR01101">
    <property type="entry name" value="5HTRECEPTOR"/>
</dbReference>
<dbReference type="PRINTS" id="PR00237">
    <property type="entry name" value="GPCRRHODOPSN"/>
</dbReference>
<dbReference type="SMART" id="SM01381">
    <property type="entry name" value="7TM_GPCR_Srsx"/>
    <property type="match status" value="1"/>
</dbReference>
<dbReference type="SUPFAM" id="SSF81321">
    <property type="entry name" value="Family A G protein-coupled receptor-like"/>
    <property type="match status" value="1"/>
</dbReference>
<dbReference type="PROSITE" id="PS00237">
    <property type="entry name" value="G_PROTEIN_RECEP_F1_1"/>
    <property type="match status" value="1"/>
</dbReference>
<dbReference type="PROSITE" id="PS50262">
    <property type="entry name" value="G_PROTEIN_RECEP_F1_2"/>
    <property type="match status" value="1"/>
</dbReference>
<evidence type="ECO:0000250" key="1">
    <source>
        <dbReference type="UniProtKB" id="P28222"/>
    </source>
</evidence>
<evidence type="ECO:0000250" key="2">
    <source>
        <dbReference type="UniProtKB" id="P41595"/>
    </source>
</evidence>
<evidence type="ECO:0000255" key="3"/>
<evidence type="ECO:0000255" key="4">
    <source>
        <dbReference type="PROSITE-ProRule" id="PRU00521"/>
    </source>
</evidence>
<evidence type="ECO:0000256" key="5">
    <source>
        <dbReference type="SAM" id="MobiDB-lite"/>
    </source>
</evidence>
<proteinExistence type="evidence at transcript level"/>
<protein>
    <recommendedName>
        <fullName>5-hydroxytryptamine receptor 1B</fullName>
        <shortName>5-HT-1B</shortName>
        <shortName>5-HT1B</shortName>
        <shortName>5-HTR1B</shortName>
    </recommendedName>
    <alternativeName>
        <fullName>5-HT1D subtype beta</fullName>
    </alternativeName>
    <alternativeName>
        <fullName>Serotonin receptor 1B</fullName>
    </alternativeName>
</protein>
<name>5HT1B_CANLF</name>
<sequence>MEAAGAPCAPPPPAGSQTGAPPANLSSAPHNCSAEGYIYQDSVALPWKVLLVILLALITLATTLSNAFVIATVYRTRKLHTPANYLIASLAVTDLLVSILVMPISTMYTVTGRWTLGQVVCDLWLSSDITCCTASILHLCVIALDRYWAITDAVEYSAKRTPKRAAVMIALVWVFSISISLPPFFWRQAKAEEEVSDCVVNTDHILYTVYSTVGAFYFPTLLLIALYGRIYVEARSRILKQTPNRTGKRLTRAQLITDSPGSTSSVTSVNSRAPDVPSESGSPVYVNQVKVRVSDALLEKKKLMAARERKATKTLGIILGAFIVCWLPFFIISLVMPICKDACWFHLAIFDFFTWLGYLNSLINPIIYTMSNEDFKQAFHKLIRFKCAG</sequence>
<keyword id="KW-0085">Behavior</keyword>
<keyword id="KW-1003">Cell membrane</keyword>
<keyword id="KW-1015">Disulfide bond</keyword>
<keyword id="KW-0297">G-protein coupled receptor</keyword>
<keyword id="KW-0325">Glycoprotein</keyword>
<keyword id="KW-0449">Lipoprotein</keyword>
<keyword id="KW-0472">Membrane</keyword>
<keyword id="KW-0564">Palmitate</keyword>
<keyword id="KW-0597">Phosphoprotein</keyword>
<keyword id="KW-0675">Receptor</keyword>
<keyword id="KW-1185">Reference proteome</keyword>
<keyword id="KW-0807">Transducer</keyword>
<keyword id="KW-0812">Transmembrane</keyword>
<keyword id="KW-1133">Transmembrane helix</keyword>
<feature type="chain" id="PRO_0000068910" description="5-hydroxytryptamine receptor 1B">
    <location>
        <begin position="1"/>
        <end position="389"/>
    </location>
</feature>
<feature type="topological domain" description="Extracellular" evidence="1">
    <location>
        <begin position="1"/>
        <end position="45"/>
    </location>
</feature>
<feature type="transmembrane region" description="Helical; Name=1" evidence="1">
    <location>
        <begin position="46"/>
        <end position="71"/>
    </location>
</feature>
<feature type="topological domain" description="Cytoplasmic" evidence="1">
    <location>
        <begin position="72"/>
        <end position="85"/>
    </location>
</feature>
<feature type="transmembrane region" description="Helical; Name=2" evidence="1">
    <location>
        <begin position="86"/>
        <end position="110"/>
    </location>
</feature>
<feature type="topological domain" description="Extracellular" evidence="1">
    <location>
        <begin position="111"/>
        <end position="118"/>
    </location>
</feature>
<feature type="transmembrane region" description="Helical; Name=3" evidence="1">
    <location>
        <begin position="119"/>
        <end position="144"/>
    </location>
</feature>
<feature type="topological domain" description="Cytoplasmic" evidence="1">
    <location>
        <begin position="145"/>
        <end position="164"/>
    </location>
</feature>
<feature type="transmembrane region" description="Helical; Name=4" evidence="1">
    <location>
        <begin position="165"/>
        <end position="183"/>
    </location>
</feature>
<feature type="topological domain" description="Extracellular" evidence="1">
    <location>
        <begin position="184"/>
        <end position="204"/>
    </location>
</feature>
<feature type="transmembrane region" description="Helical; Name=5" evidence="1">
    <location>
        <begin position="205"/>
        <end position="228"/>
    </location>
</feature>
<feature type="topological domain" description="Cytoplasmic" evidence="1">
    <location>
        <begin position="229"/>
        <end position="314"/>
    </location>
</feature>
<feature type="transmembrane region" description="Helical; Name=6" evidence="1">
    <location>
        <begin position="315"/>
        <end position="336"/>
    </location>
</feature>
<feature type="topological domain" description="Extracellular" evidence="1">
    <location>
        <begin position="337"/>
        <end position="346"/>
    </location>
</feature>
<feature type="transmembrane region" description="Helical; Name=7" evidence="1">
    <location>
        <begin position="347"/>
        <end position="369"/>
    </location>
</feature>
<feature type="topological domain" description="Cytoplasmic" evidence="1">
    <location>
        <begin position="370"/>
        <end position="389"/>
    </location>
</feature>
<feature type="region of interest" description="Disordered" evidence="5">
    <location>
        <begin position="1"/>
        <end position="27"/>
    </location>
</feature>
<feature type="region of interest" description="Disordered" evidence="5">
    <location>
        <begin position="258"/>
        <end position="281"/>
    </location>
</feature>
<feature type="short sequence motif" description="DRY motif; important for ligand-induced conformation changes and signaling" evidence="2">
    <location>
        <begin position="145"/>
        <end position="147"/>
    </location>
</feature>
<feature type="short sequence motif" description="NPxxY motif; important for ligand-induced conformation changes and signaling" evidence="2">
    <location>
        <begin position="364"/>
        <end position="368"/>
    </location>
</feature>
<feature type="compositionally biased region" description="Polar residues" evidence="5">
    <location>
        <begin position="16"/>
        <end position="27"/>
    </location>
</feature>
<feature type="compositionally biased region" description="Polar residues" evidence="5">
    <location>
        <begin position="258"/>
        <end position="271"/>
    </location>
</feature>
<feature type="binding site" evidence="1">
    <location>
        <position position="128"/>
    </location>
    <ligand>
        <name>ergotamine</name>
        <dbReference type="ChEBI" id="CHEBI:190463"/>
        <note>agonist</note>
    </ligand>
</feature>
<feature type="binding site" evidence="1">
    <location>
        <position position="133"/>
    </location>
    <ligand>
        <name>ergotamine</name>
        <dbReference type="ChEBI" id="CHEBI:190463"/>
        <note>agonist</note>
    </ligand>
</feature>
<feature type="binding site" evidence="1">
    <location>
        <position position="200"/>
    </location>
    <ligand>
        <name>ergotamine</name>
        <dbReference type="ChEBI" id="CHEBI:190463"/>
        <note>agonist</note>
    </ligand>
</feature>
<feature type="site" description="Important for species-specific agonist sensitivity" evidence="1">
    <location>
        <position position="354"/>
    </location>
</feature>
<feature type="lipid moiety-binding region" description="S-palmitoyl cysteine" evidence="3">
    <location>
        <position position="387"/>
    </location>
</feature>
<feature type="glycosylation site" description="N-linked (GlcNAc...) asparagine" evidence="3">
    <location>
        <position position="24"/>
    </location>
</feature>
<feature type="glycosylation site" description="N-linked (GlcNAc...) asparagine" evidence="3">
    <location>
        <position position="31"/>
    </location>
</feature>
<feature type="disulfide bond" evidence="4">
    <location>
        <begin position="121"/>
        <end position="198"/>
    </location>
</feature>
<gene>
    <name type="primary">HTR1B</name>
</gene>
<comment type="function">
    <text evidence="1">G-protein coupled receptor for 5-hydroxytryptamine (serotonin). Also functions as a receptor for ergot alkaloid derivatives, various anxiolytic and antidepressant drugs and other psychoactive substances, such as lysergic acid diethylamide (LSD). Ligand binding causes a conformation change that triggers signaling via guanine nucleotide-binding proteins (G proteins) and modulates the activity of downstream effectors, such as adenylate cyclase. HTR1B is coupled to G(i)/G(o) G alpha proteins and mediates inhibitory neurotransmission by inhibiting adenylate cyclase activity. Arrestin family members inhibit signaling via G proteins and mediate activation of alternative signaling pathways. Regulates the release of 5-hydroxytryptamine, dopamine and acetylcholine in the brain, and thereby affects neural activity, nociceptive processing, pain perception, mood and behavior. Besides, plays a role in vasoconstriction of cerebral arteries.</text>
</comment>
<comment type="subunit">
    <text evidence="1">Homodimer. Heterodimer with HTR1D.</text>
</comment>
<comment type="subcellular location">
    <subcellularLocation>
        <location evidence="1">Cell membrane</location>
        <topology evidence="1">Multi-pass membrane protein</topology>
    </subcellularLocation>
</comment>
<comment type="domain">
    <text evidence="1">Ligands are bound in a hydrophobic pocket formed by the transmembrane helices.</text>
</comment>
<comment type="domain">
    <text evidence="1">A residue in the 7th transmembrane region ('Thr-355' in human, 'Asn-351' in mouse and rat) is important for species-specific sensitivity to various agonists.</text>
</comment>
<comment type="PTM">
    <text evidence="1">Phosphorylated. Desensitization of the receptor may be mediated by its phosphorylation.</text>
</comment>
<comment type="PTM">
    <text evidence="1">Palmitoylated.</text>
</comment>
<comment type="similarity">
    <text evidence="4">Belongs to the G-protein coupled receptor 1 family.</text>
</comment>
<reference key="1">
    <citation type="journal article" date="2004" name="Gene">
        <title>Isolation and characterization of the canine serotonin receptor 1B gene (htr1B).</title>
        <authorList>
            <person name="van den Berg L."/>
            <person name="Imholz S."/>
            <person name="Versteeg S.A."/>
            <person name="Leegwater P.A.J."/>
            <person name="Zijlstra C."/>
            <person name="Bosma A.A."/>
            <person name="van Oost B.A."/>
        </authorList>
    </citation>
    <scope>NUCLEOTIDE SEQUENCE [GENOMIC DNA]</scope>
</reference>
<reference key="2">
    <citation type="journal article" date="2004" name="J. Vet. Med. Sci.">
        <title>Sequencing of canine 5-hydroxytriptamine receptor (5-HTR) 1B, 2A, 2C genes and identification of polymorphisms in the 5-HTR1B gene.</title>
        <authorList>
            <person name="Masuda K."/>
            <person name="Hashizume C."/>
            <person name="Ogata N."/>
            <person name="Kikusui T."/>
            <person name="Takeuchi Y."/>
            <person name="Mori Y."/>
        </authorList>
    </citation>
    <scope>NUCLEOTIDE SEQUENCE [MRNA]</scope>
    <source>
        <strain>Beagle</strain>
    </source>
</reference>
<reference key="3">
    <citation type="journal article" date="2004" name="J. Hered.">
        <title>A marker set for construction of a genetic map of the silver fox (Vulpes vulpes).</title>
        <authorList>
            <person name="Kukekova A.V."/>
            <person name="Trut L.N."/>
            <person name="Oskina I.N."/>
            <person name="Kharlamova A.V."/>
            <person name="Shikhevich S.G."/>
            <person name="Kirkness E.F."/>
            <person name="Aguirre G.D."/>
            <person name="Acland G.M."/>
        </authorList>
    </citation>
    <scope>NUCLEOTIDE SEQUENCE [GENOMIC DNA]</scope>
</reference>
<reference key="4">
    <citation type="journal article" date="1996" name="Cardiovasc. Res.">
        <title>Evidence for 5-HT1D beta but not 5-HT1D alpha receptor subtype expression in canine large coronary arteries and saphenous vein.</title>
        <authorList>
            <person name="Sgard F."/>
            <person name="Faure C."/>
            <person name="Graham D."/>
        </authorList>
    </citation>
    <scope>NUCLEOTIDE SEQUENCE [MRNA] OF 192-352</scope>
    <source>
        <strain>Alsatian</strain>
        <strain>Beagle</strain>
        <tissue>Artery</tissue>
    </source>
</reference>